<keyword id="KW-0438">Lignin biosynthesis</keyword>
<keyword id="KW-0489">Methyltransferase</keyword>
<keyword id="KW-0949">S-adenosyl-L-methionine</keyword>
<keyword id="KW-0808">Transferase</keyword>
<evidence type="ECO:0000250" key="1">
    <source>
        <dbReference type="UniProtKB" id="P28002"/>
    </source>
</evidence>
<evidence type="ECO:0000255" key="2">
    <source>
        <dbReference type="PROSITE-ProRule" id="PRU01020"/>
    </source>
</evidence>
<evidence type="ECO:0000269" key="3">
    <source>
    </source>
</evidence>
<evidence type="ECO:0000303" key="4">
    <source>
    </source>
</evidence>
<evidence type="ECO:0000305" key="5"/>
<evidence type="ECO:0000305" key="6">
    <source>
    </source>
</evidence>
<evidence type="ECO:0000312" key="7">
    <source>
        <dbReference type="EMBL" id="AAR24097.1"/>
    </source>
</evidence>
<reference evidence="5 7" key="1">
    <citation type="journal article" date="2004" name="Eur. J. Biochem.">
        <title>Furanocoumarin biosynthesis in Ammi majus L. Cloning of bergaptol O-methyltransferase.</title>
        <authorList>
            <person name="Hehmann M."/>
            <person name="Lukacin R."/>
            <person name="Ekiert H."/>
            <person name="Matern U."/>
        </authorList>
    </citation>
    <scope>NUCLEOTIDE SEQUENCE [MRNA]</scope>
    <scope>FUNCTION</scope>
    <scope>CATALYTIC ACTIVITY</scope>
    <scope>BIOPHYSICOCHEMICAL PROPERTIES</scope>
    <scope>ACTIVITY REGULATION</scope>
</reference>
<name>COMT1_AMMMJ</name>
<comment type="function">
    <text evidence="3 5">Catalyzes the conversion of caffeic acid to ferulic acid and of 5-hydroxyferulic acid to sinapic acid. The resulting products may subsequently be converted to the corresponding alcohols that are incorporated into lignins.</text>
</comment>
<comment type="catalytic activity">
    <reaction evidence="3">
        <text>(E)-caffeate + S-adenosyl-L-methionine = (E)-ferulate + S-adenosyl-L-homocysteine + H(+)</text>
        <dbReference type="Rhea" id="RHEA:20225"/>
        <dbReference type="ChEBI" id="CHEBI:15378"/>
        <dbReference type="ChEBI" id="CHEBI:29749"/>
        <dbReference type="ChEBI" id="CHEBI:57770"/>
        <dbReference type="ChEBI" id="CHEBI:57856"/>
        <dbReference type="ChEBI" id="CHEBI:59789"/>
        <dbReference type="EC" id="2.1.1.68"/>
    </reaction>
    <physiologicalReaction direction="left-to-right" evidence="6">
        <dbReference type="Rhea" id="RHEA:20226"/>
    </physiologicalReaction>
</comment>
<comment type="catalytic activity">
    <reaction evidence="3">
        <text>(E)-5-hydroxyferulate + S-adenosyl-L-methionine = (E)-sinapate + S-adenosyl-L-homocysteine + H(+)</text>
        <dbReference type="Rhea" id="RHEA:60952"/>
        <dbReference type="ChEBI" id="CHEBI:15378"/>
        <dbReference type="ChEBI" id="CHEBI:30023"/>
        <dbReference type="ChEBI" id="CHEBI:57856"/>
        <dbReference type="ChEBI" id="CHEBI:59789"/>
        <dbReference type="ChEBI" id="CHEBI:144381"/>
    </reaction>
    <physiologicalReaction direction="left-to-right" evidence="6">
        <dbReference type="Rhea" id="RHEA:60953"/>
    </physiologicalReaction>
</comment>
<comment type="activity regulation">
    <text evidence="3">Inhibited by Cu(2+), and to a lesser extent by Ni(2+), Mn(2+), Co(2+), Fe(3+) and Zn(2+). Unaffected by Fe(2+) and Mg(2+).</text>
</comment>
<comment type="biophysicochemical properties">
    <kinetics>
        <KM evidence="3">122 uM for caffeate</KM>
        <KM evidence="3">2 uM for S-adenosyl-L-methionine</KM>
        <KM evidence="3">29 uM for 5-hydroxyferulate</KM>
        <KM evidence="3">42 uM for caffeic acid methyl ester</KM>
        <KM evidence="3">219 uM for caffeoyl coenzyme A</KM>
        <KM evidence="3">2.2 mM for 3-(3,4-dihydroxyphenyl)propionate</KM>
        <KM evidence="3">133 uM for esculetin</KM>
        <KM evidence="3">103 uM for daphnetin</KM>
    </kinetics>
    <phDependence>
        <text evidence="3">Optimum pH is 7.0.</text>
    </phDependence>
    <temperatureDependence>
        <text evidence="3">Optimum temperature is 32 degrees Celsius.</text>
    </temperatureDependence>
</comment>
<comment type="pathway">
    <text evidence="1">Aromatic compound metabolism; phenylpropanoid biosynthesis.</text>
</comment>
<comment type="subunit">
    <text evidence="1">Homodimer.</text>
</comment>
<comment type="similarity">
    <text evidence="2">Belongs to the class I-like SAM-binding methyltransferase superfamily. Cation-independent O-methyltransferase family. COMT subfamily.</text>
</comment>
<feature type="chain" id="PRO_0000401109" description="Caffeic acid 3-O-methyltransferase">
    <location>
        <begin position="1"/>
        <end position="365"/>
    </location>
</feature>
<feature type="active site" description="Proton acceptor" evidence="1 2">
    <location>
        <position position="271"/>
    </location>
</feature>
<feature type="binding site" evidence="1">
    <location>
        <position position="133"/>
    </location>
    <ligand>
        <name>(E)-ferulate</name>
        <dbReference type="ChEBI" id="CHEBI:29749"/>
    </ligand>
</feature>
<feature type="binding site" evidence="1">
    <location>
        <position position="210"/>
    </location>
    <ligand>
        <name>S-adenosyl-L-homocysteine</name>
        <dbReference type="ChEBI" id="CHEBI:57856"/>
    </ligand>
</feature>
<feature type="binding site" evidence="1">
    <location>
        <position position="233"/>
    </location>
    <ligand>
        <name>S-adenosyl-L-homocysteine</name>
        <dbReference type="ChEBI" id="CHEBI:57856"/>
    </ligand>
</feature>
<feature type="binding site" evidence="1">
    <location>
        <position position="253"/>
    </location>
    <ligand>
        <name>S-adenosyl-L-homocysteine</name>
        <dbReference type="ChEBI" id="CHEBI:57856"/>
    </ligand>
</feature>
<feature type="binding site" evidence="1">
    <location>
        <position position="254"/>
    </location>
    <ligand>
        <name>S-adenosyl-L-homocysteine</name>
        <dbReference type="ChEBI" id="CHEBI:57856"/>
    </ligand>
</feature>
<feature type="binding site" evidence="1">
    <location>
        <position position="266"/>
    </location>
    <ligand>
        <name>S-adenosyl-L-homocysteine</name>
        <dbReference type="ChEBI" id="CHEBI:57856"/>
    </ligand>
</feature>
<feature type="binding site" evidence="1">
    <location>
        <position position="267"/>
    </location>
    <ligand>
        <name>S-adenosyl-L-homocysteine</name>
        <dbReference type="ChEBI" id="CHEBI:57856"/>
    </ligand>
</feature>
<feature type="binding site" evidence="1">
    <location>
        <position position="272"/>
    </location>
    <ligand>
        <name>(E)-5-hydroxyferulate</name>
        <dbReference type="ChEBI" id="CHEBI:144381"/>
    </ligand>
</feature>
<organism>
    <name type="scientific">Ammi majus</name>
    <name type="common">Bishop's weed</name>
    <dbReference type="NCBI Taxonomy" id="48026"/>
    <lineage>
        <taxon>Eukaryota</taxon>
        <taxon>Viridiplantae</taxon>
        <taxon>Streptophyta</taxon>
        <taxon>Embryophyta</taxon>
        <taxon>Tracheophyta</taxon>
        <taxon>Spermatophyta</taxon>
        <taxon>Magnoliopsida</taxon>
        <taxon>eudicotyledons</taxon>
        <taxon>Gunneridae</taxon>
        <taxon>Pentapetalae</taxon>
        <taxon>asterids</taxon>
        <taxon>campanulids</taxon>
        <taxon>Apiales</taxon>
        <taxon>Apiaceae</taxon>
        <taxon>Apioideae</taxon>
        <taxon>apioid superclade</taxon>
        <taxon>Apieae</taxon>
        <taxon>Ammi</taxon>
    </lineage>
</organism>
<gene>
    <name evidence="4" type="primary">COMT</name>
</gene>
<dbReference type="EC" id="2.1.1.68"/>
<dbReference type="EMBL" id="AY443007">
    <property type="protein sequence ID" value="AAR24097.1"/>
    <property type="molecule type" value="mRNA"/>
</dbReference>
<dbReference type="SMR" id="Q6T1F5"/>
<dbReference type="UniPathway" id="UPA00711"/>
<dbReference type="GO" id="GO:0047763">
    <property type="term" value="F:caffeate O-methyltransferase activity"/>
    <property type="evidence" value="ECO:0007669"/>
    <property type="project" value="UniProtKB-EC"/>
</dbReference>
<dbReference type="GO" id="GO:0046983">
    <property type="term" value="F:protein dimerization activity"/>
    <property type="evidence" value="ECO:0007669"/>
    <property type="project" value="InterPro"/>
</dbReference>
<dbReference type="GO" id="GO:0009809">
    <property type="term" value="P:lignin biosynthetic process"/>
    <property type="evidence" value="ECO:0007669"/>
    <property type="project" value="UniProtKB-KW"/>
</dbReference>
<dbReference type="GO" id="GO:0032259">
    <property type="term" value="P:methylation"/>
    <property type="evidence" value="ECO:0007669"/>
    <property type="project" value="UniProtKB-KW"/>
</dbReference>
<dbReference type="CDD" id="cd02440">
    <property type="entry name" value="AdoMet_MTases"/>
    <property type="match status" value="1"/>
</dbReference>
<dbReference type="FunFam" id="1.10.10.10:FF:000357">
    <property type="entry name" value="Caffeic acid 3-O-methyltransferase"/>
    <property type="match status" value="1"/>
</dbReference>
<dbReference type="FunFam" id="3.40.50.150:FF:000061">
    <property type="entry name" value="Caffeic acid O-methyltransferase"/>
    <property type="match status" value="1"/>
</dbReference>
<dbReference type="Gene3D" id="3.40.50.150">
    <property type="entry name" value="Vaccinia Virus protein VP39"/>
    <property type="match status" value="1"/>
</dbReference>
<dbReference type="Gene3D" id="1.10.10.10">
    <property type="entry name" value="Winged helix-like DNA-binding domain superfamily/Winged helix DNA-binding domain"/>
    <property type="match status" value="1"/>
</dbReference>
<dbReference type="InterPro" id="IPR016461">
    <property type="entry name" value="COMT-like"/>
</dbReference>
<dbReference type="InterPro" id="IPR001077">
    <property type="entry name" value="O_MeTrfase_dom"/>
</dbReference>
<dbReference type="InterPro" id="IPR012967">
    <property type="entry name" value="Plant_O-MeTrfase_dimerisation"/>
</dbReference>
<dbReference type="InterPro" id="IPR029063">
    <property type="entry name" value="SAM-dependent_MTases_sf"/>
</dbReference>
<dbReference type="InterPro" id="IPR036388">
    <property type="entry name" value="WH-like_DNA-bd_sf"/>
</dbReference>
<dbReference type="InterPro" id="IPR036390">
    <property type="entry name" value="WH_DNA-bd_sf"/>
</dbReference>
<dbReference type="PANTHER" id="PTHR11746">
    <property type="entry name" value="O-METHYLTRANSFERASE"/>
    <property type="match status" value="1"/>
</dbReference>
<dbReference type="Pfam" id="PF08100">
    <property type="entry name" value="Dimerisation"/>
    <property type="match status" value="1"/>
</dbReference>
<dbReference type="Pfam" id="PF00891">
    <property type="entry name" value="Methyltransf_2"/>
    <property type="match status" value="1"/>
</dbReference>
<dbReference type="PIRSF" id="PIRSF005739">
    <property type="entry name" value="O-mtase"/>
    <property type="match status" value="1"/>
</dbReference>
<dbReference type="SUPFAM" id="SSF53335">
    <property type="entry name" value="S-adenosyl-L-methionine-dependent methyltransferases"/>
    <property type="match status" value="1"/>
</dbReference>
<dbReference type="SUPFAM" id="SSF46785">
    <property type="entry name" value="Winged helix' DNA-binding domain"/>
    <property type="match status" value="1"/>
</dbReference>
<dbReference type="PROSITE" id="PS51683">
    <property type="entry name" value="SAM_OMT_II"/>
    <property type="match status" value="1"/>
</dbReference>
<proteinExistence type="evidence at protein level"/>
<accession>Q6T1F5</accession>
<protein>
    <recommendedName>
        <fullName evidence="4">Caffeic acid 3-O-methyltransferase</fullName>
        <shortName evidence="1">CAOMT</shortName>
        <shortName evidence="4">COMT</shortName>
        <ecNumber>2.1.1.68</ecNumber>
    </recommendedName>
    <alternativeName>
        <fullName evidence="1">S-adenosysl-L-methionine:caffeic acid 3-O-methyltransferase</fullName>
    </alternativeName>
</protein>
<sequence length="365" mass="40152">MNTTTELIPPTFQVNDDEEEACMFAMQLASASVLPMVLKSAIELNLLESIAKAGPGAYVSPSQLAAALPSSQPDTPVMLDRILRLLASYSVLNCKLRDLPDARVERLYGLAPVCKFLTKNSDGVSMAPLLLMNQDKILMESWYHLKDAVLDGGIPFNKAYGMTAFEYHGKDPRFNKVFNQGMSNHSTITMKKILQTYDGFGGLKTVVDVGGGTGATLNMIISKYPNLKGINFDLPHVVEDAPSYAGVEHVGGDMFVSVPKGDAIFMKWICHDWSDAHCLAFLKNCYKALPKDGKVILAECILPEAPDSKLTTKNVILIDVIMLAHNPGGKERTEKEFEAFGKQAGFKSFNKACCAYNTWVIEYYK</sequence>